<sequence>MLKNIINKKNLFINNQQNIFQIIKRNKMTDSTVDNKGYIVGIYENEEFTPLGQQLNEKTNGHLLKSIKLSDTKGKVGDNLVLYNVTPEVSRVAIVGLGKKENNNSTTYEKNENTRKAIGSGVKALKSKNATHLTIDSNIGDAKQTAEGAFLSNFKFDFKTGTSGKTANSTNESIQVQLSPSPSSEECFKEGKILAESQNFARVLMETPANLLTPTNFVQHVSSQMKELIDSGKVEMIVREEQWVKDQKMGMFWGVAKGSDEPLKFLELHYRGASADGKDSIVYVGKGITFDSGGISIKPSANMGLMKGDMGGAATAVSAMFGVASLGLKVNLITITPLCENMPSGKATKPGDILTAANGKTVEVDNTDAEGRLILGDALHYACSFKPTHIIDIATLTGAIDVALGQHYAGCFTTTDSLWDQLNECGNISGERLWRMPLIPEYRKQMETSKVADLINSAGRSGGACCAAGFLKEFITADQSWSHLDIAGVMSSSEDGPYIRKGMTGKPTRTLIEFAKKNQQ</sequence>
<proteinExistence type="evidence at protein level"/>
<dbReference type="EC" id="3.4.11.1"/>
<dbReference type="EC" id="3.4.11.5"/>
<dbReference type="EMBL" id="AY581145">
    <property type="protein sequence ID" value="AAT92029.1"/>
    <property type="molecule type" value="Genomic_DNA"/>
</dbReference>
<dbReference type="EMBL" id="AAFI02000032">
    <property type="protein sequence ID" value="EAL67576.1"/>
    <property type="molecule type" value="Genomic_DNA"/>
</dbReference>
<dbReference type="RefSeq" id="XP_641537.1">
    <property type="nucleotide sequence ID" value="XM_636445.1"/>
</dbReference>
<dbReference type="SMR" id="Q5V9F0"/>
<dbReference type="FunCoup" id="Q5V9F0">
    <property type="interactions" value="333"/>
</dbReference>
<dbReference type="STRING" id="44689.Q5V9F0"/>
<dbReference type="MEROPS" id="M17.001"/>
<dbReference type="PaxDb" id="44689-DDB0231024"/>
<dbReference type="EnsemblProtists" id="EAL67576">
    <property type="protein sequence ID" value="EAL67576"/>
    <property type="gene ID" value="DDB_G0279793"/>
</dbReference>
<dbReference type="GeneID" id="8622210"/>
<dbReference type="KEGG" id="ddi:DDB_G0279793"/>
<dbReference type="dictyBase" id="DDB_G0279793">
    <property type="gene designation" value="lap"/>
</dbReference>
<dbReference type="VEuPathDB" id="AmoebaDB:DDB_G0279793"/>
<dbReference type="eggNOG" id="KOG2597">
    <property type="taxonomic scope" value="Eukaryota"/>
</dbReference>
<dbReference type="HOGENOM" id="CLU_013734_1_2_1"/>
<dbReference type="InParanoid" id="Q5V9F0"/>
<dbReference type="OMA" id="MFAQATV"/>
<dbReference type="PhylomeDB" id="Q5V9F0"/>
<dbReference type="PRO" id="PR:Q5V9F0"/>
<dbReference type="Proteomes" id="UP000002195">
    <property type="component" value="Chromosome 3"/>
</dbReference>
<dbReference type="GO" id="GO:0005737">
    <property type="term" value="C:cytoplasm"/>
    <property type="evidence" value="ECO:0000318"/>
    <property type="project" value="GO_Central"/>
</dbReference>
<dbReference type="GO" id="GO:0030145">
    <property type="term" value="F:manganese ion binding"/>
    <property type="evidence" value="ECO:0007669"/>
    <property type="project" value="InterPro"/>
</dbReference>
<dbReference type="GO" id="GO:0070006">
    <property type="term" value="F:metalloaminopeptidase activity"/>
    <property type="evidence" value="ECO:0007669"/>
    <property type="project" value="InterPro"/>
</dbReference>
<dbReference type="GO" id="GO:0008233">
    <property type="term" value="F:peptidase activity"/>
    <property type="evidence" value="ECO:0000318"/>
    <property type="project" value="GO_Central"/>
</dbReference>
<dbReference type="GO" id="GO:0006508">
    <property type="term" value="P:proteolysis"/>
    <property type="evidence" value="ECO:0000318"/>
    <property type="project" value="GO_Central"/>
</dbReference>
<dbReference type="CDD" id="cd00433">
    <property type="entry name" value="Peptidase_M17"/>
    <property type="match status" value="1"/>
</dbReference>
<dbReference type="Gene3D" id="3.40.220.10">
    <property type="entry name" value="Leucine Aminopeptidase, subunit E, domain 1"/>
    <property type="match status" value="1"/>
</dbReference>
<dbReference type="Gene3D" id="3.40.630.10">
    <property type="entry name" value="Zn peptidases"/>
    <property type="match status" value="1"/>
</dbReference>
<dbReference type="HAMAP" id="MF_00181">
    <property type="entry name" value="Cytosol_peptidase_M17"/>
    <property type="match status" value="1"/>
</dbReference>
<dbReference type="InterPro" id="IPR011356">
    <property type="entry name" value="Leucine_aapep/pepB"/>
</dbReference>
<dbReference type="InterPro" id="IPR043472">
    <property type="entry name" value="Macro_dom-like"/>
</dbReference>
<dbReference type="InterPro" id="IPR000819">
    <property type="entry name" value="Peptidase_M17_C"/>
</dbReference>
<dbReference type="InterPro" id="IPR023042">
    <property type="entry name" value="Peptidase_M17_leu_NH2_pept"/>
</dbReference>
<dbReference type="InterPro" id="IPR008283">
    <property type="entry name" value="Peptidase_M17_N"/>
</dbReference>
<dbReference type="PANTHER" id="PTHR11963:SF23">
    <property type="entry name" value="CYTOSOL AMINOPEPTIDASE"/>
    <property type="match status" value="1"/>
</dbReference>
<dbReference type="PANTHER" id="PTHR11963">
    <property type="entry name" value="LEUCINE AMINOPEPTIDASE-RELATED"/>
    <property type="match status" value="1"/>
</dbReference>
<dbReference type="Pfam" id="PF00883">
    <property type="entry name" value="Peptidase_M17"/>
    <property type="match status" value="1"/>
</dbReference>
<dbReference type="Pfam" id="PF02789">
    <property type="entry name" value="Peptidase_M17_N"/>
    <property type="match status" value="1"/>
</dbReference>
<dbReference type="PRINTS" id="PR00481">
    <property type="entry name" value="LAMNOPPTDASE"/>
</dbReference>
<dbReference type="SUPFAM" id="SSF52949">
    <property type="entry name" value="Macro domain-like"/>
    <property type="match status" value="1"/>
</dbReference>
<dbReference type="SUPFAM" id="SSF53187">
    <property type="entry name" value="Zn-dependent exopeptidases"/>
    <property type="match status" value="1"/>
</dbReference>
<dbReference type="PROSITE" id="PS00631">
    <property type="entry name" value="CYTOSOL_AP"/>
    <property type="match status" value="1"/>
</dbReference>
<name>AMPL_DICDI</name>
<protein>
    <recommendedName>
        <fullName>Cytosol aminopeptidase</fullName>
        <ecNumber>3.4.11.1</ecNumber>
    </recommendedName>
    <alternativeName>
        <fullName>Leucine aminopeptidase</fullName>
        <shortName>LAP</shortName>
    </alternativeName>
    <alternativeName>
        <fullName>Leucyl aminopeptidase</fullName>
    </alternativeName>
    <alternativeName>
        <fullName>Proline aminopeptidase</fullName>
        <ecNumber>3.4.11.5</ecNumber>
    </alternativeName>
    <alternativeName>
        <fullName>Prolyl aminopeptidase</fullName>
    </alternativeName>
</protein>
<accession>Q5V9F0</accession>
<accession>Q54WC1</accession>
<comment type="function">
    <text evidence="1">Presumably involved in the processing and regular turnover of intracellular proteins. Catalyzes the removal of unsubstituted N-terminal amino acids from various peptides (By similarity).</text>
</comment>
<comment type="catalytic activity">
    <reaction>
        <text>Release of an N-terminal amino acid, Xaa-|-Yaa-, in which Xaa is preferably Leu, but may be other amino acids including Pro although not Arg or Lys, and Yaa may be Pro. Amino acid amides and methyl esters are also readily hydrolyzed, but rates on arylamides are exceedingly low.</text>
        <dbReference type="EC" id="3.4.11.1"/>
    </reaction>
</comment>
<comment type="catalytic activity">
    <reaction>
        <text>Release of N-terminal proline from a peptide.</text>
        <dbReference type="EC" id="3.4.11.5"/>
    </reaction>
</comment>
<comment type="cofactor">
    <cofactor evidence="1">
        <name>Zn(2+)</name>
        <dbReference type="ChEBI" id="CHEBI:29105"/>
    </cofactor>
    <text evidence="1">Binds 2 Zn(2+) ions per subunit.</text>
</comment>
<comment type="subunit">
    <text evidence="1">Homohexamer.</text>
</comment>
<comment type="subcellular location">
    <subcellularLocation>
        <location evidence="1">Cytoplasm</location>
    </subcellularLocation>
</comment>
<comment type="similarity">
    <text evidence="2">Belongs to the peptidase M17 family.</text>
</comment>
<evidence type="ECO:0000250" key="1"/>
<evidence type="ECO:0000305" key="2"/>
<keyword id="KW-0031">Aminopeptidase</keyword>
<keyword id="KW-0963">Cytoplasm</keyword>
<keyword id="KW-0903">Direct protein sequencing</keyword>
<keyword id="KW-0378">Hydrolase</keyword>
<keyword id="KW-0479">Metal-binding</keyword>
<keyword id="KW-0645">Protease</keyword>
<keyword id="KW-1185">Reference proteome</keyword>
<keyword id="KW-0862">Zinc</keyword>
<organism>
    <name type="scientific">Dictyostelium discoideum</name>
    <name type="common">Social amoeba</name>
    <dbReference type="NCBI Taxonomy" id="44689"/>
    <lineage>
        <taxon>Eukaryota</taxon>
        <taxon>Amoebozoa</taxon>
        <taxon>Evosea</taxon>
        <taxon>Eumycetozoa</taxon>
        <taxon>Dictyostelia</taxon>
        <taxon>Dictyosteliales</taxon>
        <taxon>Dictyosteliaceae</taxon>
        <taxon>Dictyostelium</taxon>
    </lineage>
</organism>
<gene>
    <name type="primary">lap</name>
    <name type="ORF">DDB_G0279793</name>
</gene>
<reference key="1">
    <citation type="submission" date="2004-03" db="EMBL/GenBank/DDBJ databases">
        <authorList>
            <person name="Huang J."/>
            <person name="Mullapudi N."/>
            <person name="Lancto C."/>
            <person name="Scott M."/>
            <person name="Abrahamsen M."/>
            <person name="Kissinger J.C."/>
        </authorList>
    </citation>
    <scope>NUCLEOTIDE SEQUENCE [GENOMIC DNA]</scope>
</reference>
<reference key="2">
    <citation type="journal article" date="2005" name="Nature">
        <title>The genome of the social amoeba Dictyostelium discoideum.</title>
        <authorList>
            <person name="Eichinger L."/>
            <person name="Pachebat J.A."/>
            <person name="Gloeckner G."/>
            <person name="Rajandream M.A."/>
            <person name="Sucgang R."/>
            <person name="Berriman M."/>
            <person name="Song J."/>
            <person name="Olsen R."/>
            <person name="Szafranski K."/>
            <person name="Xu Q."/>
            <person name="Tunggal B."/>
            <person name="Kummerfeld S."/>
            <person name="Madera M."/>
            <person name="Konfortov B.A."/>
            <person name="Rivero F."/>
            <person name="Bankier A.T."/>
            <person name="Lehmann R."/>
            <person name="Hamlin N."/>
            <person name="Davies R."/>
            <person name="Gaudet P."/>
            <person name="Fey P."/>
            <person name="Pilcher K."/>
            <person name="Chen G."/>
            <person name="Saunders D."/>
            <person name="Sodergren E.J."/>
            <person name="Davis P."/>
            <person name="Kerhornou A."/>
            <person name="Nie X."/>
            <person name="Hall N."/>
            <person name="Anjard C."/>
            <person name="Hemphill L."/>
            <person name="Bason N."/>
            <person name="Farbrother P."/>
            <person name="Desany B."/>
            <person name="Just E."/>
            <person name="Morio T."/>
            <person name="Rost R."/>
            <person name="Churcher C.M."/>
            <person name="Cooper J."/>
            <person name="Haydock S."/>
            <person name="van Driessche N."/>
            <person name="Cronin A."/>
            <person name="Goodhead I."/>
            <person name="Muzny D.M."/>
            <person name="Mourier T."/>
            <person name="Pain A."/>
            <person name="Lu M."/>
            <person name="Harper D."/>
            <person name="Lindsay R."/>
            <person name="Hauser H."/>
            <person name="James K.D."/>
            <person name="Quiles M."/>
            <person name="Madan Babu M."/>
            <person name="Saito T."/>
            <person name="Buchrieser C."/>
            <person name="Wardroper A."/>
            <person name="Felder M."/>
            <person name="Thangavelu M."/>
            <person name="Johnson D."/>
            <person name="Knights A."/>
            <person name="Loulseged H."/>
            <person name="Mungall K.L."/>
            <person name="Oliver K."/>
            <person name="Price C."/>
            <person name="Quail M.A."/>
            <person name="Urushihara H."/>
            <person name="Hernandez J."/>
            <person name="Rabbinowitsch E."/>
            <person name="Steffen D."/>
            <person name="Sanders M."/>
            <person name="Ma J."/>
            <person name="Kohara Y."/>
            <person name="Sharp S."/>
            <person name="Simmonds M.N."/>
            <person name="Spiegler S."/>
            <person name="Tivey A."/>
            <person name="Sugano S."/>
            <person name="White B."/>
            <person name="Walker D."/>
            <person name="Woodward J.R."/>
            <person name="Winckler T."/>
            <person name="Tanaka Y."/>
            <person name="Shaulsky G."/>
            <person name="Schleicher M."/>
            <person name="Weinstock G.M."/>
            <person name="Rosenthal A."/>
            <person name="Cox E.C."/>
            <person name="Chisholm R.L."/>
            <person name="Gibbs R.A."/>
            <person name="Loomis W.F."/>
            <person name="Platzer M."/>
            <person name="Kay R.R."/>
            <person name="Williams J.G."/>
            <person name="Dear P.H."/>
            <person name="Noegel A.A."/>
            <person name="Barrell B.G."/>
            <person name="Kuspa A."/>
        </authorList>
    </citation>
    <scope>NUCLEOTIDE SEQUENCE [LARGE SCALE GENOMIC DNA]</scope>
    <source>
        <strain>AX4</strain>
    </source>
</reference>
<reference key="3">
    <citation type="submission" date="2010-01" db="UniProtKB">
        <authorList>
            <person name="Bienvenut W.V."/>
            <person name="Veltman D.M."/>
            <person name="Insall R.H."/>
        </authorList>
    </citation>
    <scope>PROTEIN SEQUENCE OF 74-91; 127-155; 193-226; 249-257; 265-286; 347-360; 436-443; 451-460 AND 510-517</scope>
    <scope>IDENTIFICATION BY MASS SPECTROMETRY</scope>
</reference>
<feature type="chain" id="PRO_0000328614" description="Cytosol aminopeptidase">
    <location>
        <begin position="1"/>
        <end position="520"/>
    </location>
</feature>
<feature type="active site" evidence="1">
    <location>
        <position position="298"/>
    </location>
</feature>
<feature type="active site" evidence="1">
    <location>
        <position position="372"/>
    </location>
</feature>
<feature type="binding site" evidence="1">
    <location>
        <position position="286"/>
    </location>
    <ligand>
        <name>Zn(2+)</name>
        <dbReference type="ChEBI" id="CHEBI:29105"/>
        <label>2</label>
    </ligand>
</feature>
<feature type="binding site" evidence="1">
    <location>
        <position position="291"/>
    </location>
    <ligand>
        <name>Zn(2+)</name>
        <dbReference type="ChEBI" id="CHEBI:29105"/>
        <label>1</label>
    </ligand>
</feature>
<feature type="binding site" evidence="1">
    <location>
        <position position="291"/>
    </location>
    <ligand>
        <name>Zn(2+)</name>
        <dbReference type="ChEBI" id="CHEBI:29105"/>
        <label>2</label>
    </ligand>
</feature>
<feature type="binding site" evidence="1">
    <location>
        <position position="309"/>
    </location>
    <ligand>
        <name>Zn(2+)</name>
        <dbReference type="ChEBI" id="CHEBI:29105"/>
        <label>2</label>
    </ligand>
</feature>
<feature type="binding site" evidence="1">
    <location>
        <position position="368"/>
    </location>
    <ligand>
        <name>Zn(2+)</name>
        <dbReference type="ChEBI" id="CHEBI:29105"/>
        <label>1</label>
    </ligand>
</feature>
<feature type="binding site" evidence="1">
    <location>
        <position position="370"/>
    </location>
    <ligand>
        <name>Zn(2+)</name>
        <dbReference type="ChEBI" id="CHEBI:29105"/>
        <label>1</label>
    </ligand>
</feature>
<feature type="binding site" evidence="1">
    <location>
        <position position="370"/>
    </location>
    <ligand>
        <name>Zn(2+)</name>
        <dbReference type="ChEBI" id="CHEBI:29105"/>
        <label>2</label>
    </ligand>
</feature>